<name>GATA3_BOVIN</name>
<reference key="1">
    <citation type="submission" date="2006-09" db="EMBL/GenBank/DDBJ databases">
        <authorList>
            <consortium name="NIH - Mammalian Gene Collection (MGC) project"/>
        </authorList>
    </citation>
    <scope>NUCLEOTIDE SEQUENCE [LARGE SCALE MRNA]</scope>
    <source>
        <strain>Hereford</strain>
        <tissue>Thymus</tissue>
    </source>
</reference>
<feature type="chain" id="PRO_0000289587" description="Trans-acting T-cell-specific transcription factor GATA-3">
    <location>
        <begin position="1"/>
        <end position="443"/>
    </location>
</feature>
<feature type="zinc finger region" description="GATA-type 1" evidence="4">
    <location>
        <begin position="263"/>
        <end position="287"/>
    </location>
</feature>
<feature type="zinc finger region" description="GATA-type 2" evidence="4">
    <location>
        <begin position="317"/>
        <end position="341"/>
    </location>
</feature>
<feature type="region of interest" description="Interaction with TBX21" evidence="3">
    <location>
        <begin position="1"/>
        <end position="258"/>
    </location>
</feature>
<feature type="region of interest" description="Disordered" evidence="5">
    <location>
        <begin position="1"/>
        <end position="30"/>
    </location>
</feature>
<feature type="region of interest" description="Disordered" evidence="5">
    <location>
        <begin position="128"/>
        <end position="181"/>
    </location>
</feature>
<feature type="region of interest" description="Flexible linker" evidence="1">
    <location>
        <begin position="288"/>
        <end position="316"/>
    </location>
</feature>
<feature type="region of interest" description="Disordered" evidence="5">
    <location>
        <begin position="414"/>
        <end position="443"/>
    </location>
</feature>
<feature type="short sequence motif" description="YxKxHxxxRP" evidence="1">
    <location>
        <begin position="344"/>
        <end position="353"/>
    </location>
</feature>
<feature type="compositionally biased region" description="Low complexity" evidence="5">
    <location>
        <begin position="129"/>
        <end position="149"/>
    </location>
</feature>
<feature type="compositionally biased region" description="Low complexity" evidence="5">
    <location>
        <begin position="414"/>
        <end position="429"/>
    </location>
</feature>
<feature type="modified residue" description="Phosphoserine" evidence="2">
    <location>
        <position position="115"/>
    </location>
</feature>
<feature type="modified residue" description="Phosphoserine" evidence="2">
    <location>
        <position position="162"/>
    </location>
</feature>
<keyword id="KW-0010">Activator</keyword>
<keyword id="KW-0238">DNA-binding</keyword>
<keyword id="KW-0391">Immunity</keyword>
<keyword id="KW-0399">Innate immunity</keyword>
<keyword id="KW-0479">Metal-binding</keyword>
<keyword id="KW-0539">Nucleus</keyword>
<keyword id="KW-0597">Phosphoprotein</keyword>
<keyword id="KW-1185">Reference proteome</keyword>
<keyword id="KW-0677">Repeat</keyword>
<keyword id="KW-0804">Transcription</keyword>
<keyword id="KW-0805">Transcription regulation</keyword>
<keyword id="KW-0862">Zinc</keyword>
<keyword id="KW-0863">Zinc-finger</keyword>
<proteinExistence type="evidence at transcript level"/>
<sequence length="443" mass="47807">MEVTADQPRWVSHHHPAVLNGQHPDTHHPGLGHSYMDPAQYPLPEEVDVLFNIDGQGNHVPSYYGNSVRATVQRYPPTHHGSQVCRPPLLHGSLPWLDGGKALGSHHTASPWNLSPFSKTSIHHGSPGPLSVYPPASSSSLSAGHSSPHLFTFPPTPPKDVSPDPSLSTPGSAGSGRQDEKECIKYQVPLPDSMKLESAHPRGSMATLGGAAASAHHPITTYPPYVPEYSSGLFPPSSLLGGSPTGFGCKSRPKARSSTGRECVNCGATSTPLWRRDGTGHYLCNACGLYHKMNGQNRPLIKPKRRLSAARRAGTSCANCQTTTTTLWRRNANGDPVCNACGLYYKLHNINRPLTMKKEGIQTRNRKMSSKSKKCKKVHDALEDFPKSSSFNPAALSRHMSSLSHISPFSHSSHMLTTPTPMHPPSSLSFGPHHPSSMVTAMG</sequence>
<dbReference type="EMBL" id="BC123555">
    <property type="protein sequence ID" value="AAI23556.1"/>
    <property type="molecule type" value="mRNA"/>
</dbReference>
<dbReference type="RefSeq" id="NP_001070272.1">
    <property type="nucleotide sequence ID" value="NM_001076804.1"/>
</dbReference>
<dbReference type="RefSeq" id="XP_005214184.1">
    <property type="nucleotide sequence ID" value="XM_005214127.5"/>
</dbReference>
<dbReference type="SMR" id="Q08DV0"/>
<dbReference type="FunCoup" id="Q08DV0">
    <property type="interactions" value="85"/>
</dbReference>
<dbReference type="STRING" id="9913.ENSBTAP00000068033"/>
<dbReference type="PaxDb" id="9913-ENSBTAP00000022908"/>
<dbReference type="GeneID" id="505169"/>
<dbReference type="KEGG" id="bta:505169"/>
<dbReference type="CTD" id="2625"/>
<dbReference type="eggNOG" id="KOG1601">
    <property type="taxonomic scope" value="Eukaryota"/>
</dbReference>
<dbReference type="HOGENOM" id="CLU_027524_1_0_1"/>
<dbReference type="InParanoid" id="Q08DV0"/>
<dbReference type="OrthoDB" id="2162994at2759"/>
<dbReference type="TreeFam" id="TF315391"/>
<dbReference type="Proteomes" id="UP000009136">
    <property type="component" value="Unplaced"/>
</dbReference>
<dbReference type="GO" id="GO:0000785">
    <property type="term" value="C:chromatin"/>
    <property type="evidence" value="ECO:0000250"/>
    <property type="project" value="UniProtKB"/>
</dbReference>
<dbReference type="GO" id="GO:0005634">
    <property type="term" value="C:nucleus"/>
    <property type="evidence" value="ECO:0000250"/>
    <property type="project" value="UniProtKB"/>
</dbReference>
<dbReference type="GO" id="GO:0000987">
    <property type="term" value="F:cis-regulatory region sequence-specific DNA binding"/>
    <property type="evidence" value="ECO:0000250"/>
    <property type="project" value="UniProtKB"/>
</dbReference>
<dbReference type="GO" id="GO:0003700">
    <property type="term" value="F:DNA-binding transcription factor activity"/>
    <property type="evidence" value="ECO:0000250"/>
    <property type="project" value="UniProtKB"/>
</dbReference>
<dbReference type="GO" id="GO:0000981">
    <property type="term" value="F:DNA-binding transcription factor activity, RNA polymerase II-specific"/>
    <property type="evidence" value="ECO:0000250"/>
    <property type="project" value="UniProtKB"/>
</dbReference>
<dbReference type="GO" id="GO:0001227">
    <property type="term" value="F:DNA-binding transcription repressor activity, RNA polymerase II-specific"/>
    <property type="evidence" value="ECO:0000250"/>
    <property type="project" value="UniProtKB"/>
</dbReference>
<dbReference type="GO" id="GO:0070888">
    <property type="term" value="F:E-box binding"/>
    <property type="evidence" value="ECO:0000250"/>
    <property type="project" value="UniProtKB"/>
</dbReference>
<dbReference type="GO" id="GO:0000978">
    <property type="term" value="F:RNA polymerase II cis-regulatory region sequence-specific DNA binding"/>
    <property type="evidence" value="ECO:0000318"/>
    <property type="project" value="GO_Central"/>
</dbReference>
<dbReference type="GO" id="GO:0000976">
    <property type="term" value="F:transcription cis-regulatory region binding"/>
    <property type="evidence" value="ECO:0000250"/>
    <property type="project" value="UniProtKB"/>
</dbReference>
<dbReference type="GO" id="GO:0008270">
    <property type="term" value="F:zinc ion binding"/>
    <property type="evidence" value="ECO:0007669"/>
    <property type="project" value="UniProtKB-KW"/>
</dbReference>
<dbReference type="GO" id="GO:0048646">
    <property type="term" value="P:anatomical structure formation involved in morphogenesis"/>
    <property type="evidence" value="ECO:0000250"/>
    <property type="project" value="UniProtKB"/>
</dbReference>
<dbReference type="GO" id="GO:0003180">
    <property type="term" value="P:aortic valve morphogenesis"/>
    <property type="evidence" value="ECO:0000250"/>
    <property type="project" value="UniProtKB"/>
</dbReference>
<dbReference type="GO" id="GO:0060070">
    <property type="term" value="P:canonical Wnt signaling pathway"/>
    <property type="evidence" value="ECO:0000250"/>
    <property type="project" value="UniProtKB"/>
</dbReference>
<dbReference type="GO" id="GO:0003215">
    <property type="term" value="P:cardiac right ventricle morphogenesis"/>
    <property type="evidence" value="ECO:0000250"/>
    <property type="project" value="UniProtKB"/>
</dbReference>
<dbReference type="GO" id="GO:0045165">
    <property type="term" value="P:cell fate commitment"/>
    <property type="evidence" value="ECO:0000318"/>
    <property type="project" value="GO_Central"/>
</dbReference>
<dbReference type="GO" id="GO:0001709">
    <property type="term" value="P:cell fate determination"/>
    <property type="evidence" value="ECO:0000250"/>
    <property type="project" value="UniProtKB"/>
</dbReference>
<dbReference type="GO" id="GO:0043583">
    <property type="term" value="P:ear development"/>
    <property type="evidence" value="ECO:0000250"/>
    <property type="project" value="UniProtKB"/>
</dbReference>
<dbReference type="GO" id="GO:0048568">
    <property type="term" value="P:embryonic organ development"/>
    <property type="evidence" value="ECO:0000318"/>
    <property type="project" value="GO_Central"/>
</dbReference>
<dbReference type="GO" id="GO:0002520">
    <property type="term" value="P:immune system development"/>
    <property type="evidence" value="ECO:0000318"/>
    <property type="project" value="GO_Central"/>
</dbReference>
<dbReference type="GO" id="GO:0006954">
    <property type="term" value="P:inflammatory response"/>
    <property type="evidence" value="ECO:0000250"/>
    <property type="project" value="UniProtKB"/>
</dbReference>
<dbReference type="GO" id="GO:0045087">
    <property type="term" value="P:innate immune response"/>
    <property type="evidence" value="ECO:0007669"/>
    <property type="project" value="UniProtKB-KW"/>
</dbReference>
<dbReference type="GO" id="GO:0001822">
    <property type="term" value="P:kidney development"/>
    <property type="evidence" value="ECO:0000250"/>
    <property type="project" value="UniProtKB"/>
</dbReference>
<dbReference type="GO" id="GO:0072676">
    <property type="term" value="P:lymphocyte migration"/>
    <property type="evidence" value="ECO:0000250"/>
    <property type="project" value="UniProtKB"/>
</dbReference>
<dbReference type="GO" id="GO:0030225">
    <property type="term" value="P:macrophage differentiation"/>
    <property type="evidence" value="ECO:0000250"/>
    <property type="project" value="UniProtKB"/>
</dbReference>
<dbReference type="GO" id="GO:0008584">
    <property type="term" value="P:male gonad development"/>
    <property type="evidence" value="ECO:0000250"/>
    <property type="project" value="UniProtKB"/>
</dbReference>
<dbReference type="GO" id="GO:0060231">
    <property type="term" value="P:mesenchymal to epithelial transition"/>
    <property type="evidence" value="ECO:0000250"/>
    <property type="project" value="UniProtKB"/>
</dbReference>
<dbReference type="GO" id="GO:0001823">
    <property type="term" value="P:mesonephros development"/>
    <property type="evidence" value="ECO:0000250"/>
    <property type="project" value="UniProtKB"/>
</dbReference>
<dbReference type="GO" id="GO:0045786">
    <property type="term" value="P:negative regulation of cell cycle"/>
    <property type="evidence" value="ECO:0000250"/>
    <property type="project" value="UniProtKB"/>
</dbReference>
<dbReference type="GO" id="GO:2000146">
    <property type="term" value="P:negative regulation of cell motility"/>
    <property type="evidence" value="ECO:0000250"/>
    <property type="project" value="UniProtKB"/>
</dbReference>
<dbReference type="GO" id="GO:0008285">
    <property type="term" value="P:negative regulation of cell population proliferation"/>
    <property type="evidence" value="ECO:0000250"/>
    <property type="project" value="UniProtKB"/>
</dbReference>
<dbReference type="GO" id="GO:2000607">
    <property type="term" value="P:negative regulation of cell proliferation involved in mesonephros development"/>
    <property type="evidence" value="ECO:0000250"/>
    <property type="project" value="UniProtKB"/>
</dbReference>
<dbReference type="GO" id="GO:0045892">
    <property type="term" value="P:negative regulation of DNA-templated transcription"/>
    <property type="evidence" value="ECO:0000250"/>
    <property type="project" value="UniProtKB"/>
</dbReference>
<dbReference type="GO" id="GO:2000352">
    <property type="term" value="P:negative regulation of endothelial cell apoptotic process"/>
    <property type="evidence" value="ECO:0000250"/>
    <property type="project" value="UniProtKB"/>
</dbReference>
<dbReference type="GO" id="GO:2000703">
    <property type="term" value="P:negative regulation of fibroblast growth factor receptor signaling pathway involved in ureteric bud formation"/>
    <property type="evidence" value="ECO:0000250"/>
    <property type="project" value="UniProtKB"/>
</dbReference>
<dbReference type="GO" id="GO:2000734">
    <property type="term" value="P:negative regulation of glial cell-derived neurotrophic factor receptor signaling pathway involved in ureteric bud formation"/>
    <property type="evidence" value="ECO:0000250"/>
    <property type="project" value="UniProtKB"/>
</dbReference>
<dbReference type="GO" id="GO:0050728">
    <property type="term" value="P:negative regulation of inflammatory response"/>
    <property type="evidence" value="ECO:0000250"/>
    <property type="project" value="UniProtKB"/>
</dbReference>
<dbReference type="GO" id="GO:0000122">
    <property type="term" value="P:negative regulation of transcription by RNA polymerase II"/>
    <property type="evidence" value="ECO:0000318"/>
    <property type="project" value="GO_Central"/>
</dbReference>
<dbReference type="GO" id="GO:0072179">
    <property type="term" value="P:nephric duct formation"/>
    <property type="evidence" value="ECO:0000250"/>
    <property type="project" value="UniProtKB"/>
</dbReference>
<dbReference type="GO" id="GO:0072178">
    <property type="term" value="P:nephric duct morphogenesis"/>
    <property type="evidence" value="ECO:0000250"/>
    <property type="project" value="UniProtKB"/>
</dbReference>
<dbReference type="GO" id="GO:0042421">
    <property type="term" value="P:norepinephrine biosynthetic process"/>
    <property type="evidence" value="ECO:0000250"/>
    <property type="project" value="UniProtKB"/>
</dbReference>
<dbReference type="GO" id="GO:0060037">
    <property type="term" value="P:pharyngeal system development"/>
    <property type="evidence" value="ECO:0000250"/>
    <property type="project" value="UniProtKB"/>
</dbReference>
<dbReference type="GO" id="GO:0043491">
    <property type="term" value="P:phosphatidylinositol 3-kinase/protein kinase B signal transduction"/>
    <property type="evidence" value="ECO:0000250"/>
    <property type="project" value="UniProtKB"/>
</dbReference>
<dbReference type="GO" id="GO:0045893">
    <property type="term" value="P:positive regulation of DNA-templated transcription"/>
    <property type="evidence" value="ECO:0000250"/>
    <property type="project" value="UniProtKB"/>
</dbReference>
<dbReference type="GO" id="GO:0010595">
    <property type="term" value="P:positive regulation of endothelial cell migration"/>
    <property type="evidence" value="ECO:0000250"/>
    <property type="project" value="UniProtKB"/>
</dbReference>
<dbReference type="GO" id="GO:0032736">
    <property type="term" value="P:positive regulation of interleukin-13 production"/>
    <property type="evidence" value="ECO:0000250"/>
    <property type="project" value="UniProtKB"/>
</dbReference>
<dbReference type="GO" id="GO:0032753">
    <property type="term" value="P:positive regulation of interleukin-4 production"/>
    <property type="evidence" value="ECO:0000250"/>
    <property type="project" value="UniProtKB"/>
</dbReference>
<dbReference type="GO" id="GO:0032754">
    <property type="term" value="P:positive regulation of interleukin-5 production"/>
    <property type="evidence" value="ECO:0000250"/>
    <property type="project" value="UniProtKB"/>
</dbReference>
<dbReference type="GO" id="GO:0051897">
    <property type="term" value="P:positive regulation of phosphatidylinositol 3-kinase/protein kinase B signal transduction"/>
    <property type="evidence" value="ECO:0000250"/>
    <property type="project" value="UniProtKB"/>
</dbReference>
<dbReference type="GO" id="GO:0009967">
    <property type="term" value="P:positive regulation of signal transduction"/>
    <property type="evidence" value="ECO:0000250"/>
    <property type="project" value="UniProtKB"/>
</dbReference>
<dbReference type="GO" id="GO:0045582">
    <property type="term" value="P:positive regulation of T cell differentiation"/>
    <property type="evidence" value="ECO:0000250"/>
    <property type="project" value="UniProtKB"/>
</dbReference>
<dbReference type="GO" id="GO:2000611">
    <property type="term" value="P:positive regulation of thyroid hormone generation"/>
    <property type="evidence" value="ECO:0000250"/>
    <property type="project" value="UniProtKB"/>
</dbReference>
<dbReference type="GO" id="GO:0045944">
    <property type="term" value="P:positive regulation of transcription by RNA polymerase II"/>
    <property type="evidence" value="ECO:0000250"/>
    <property type="project" value="UniProtKB"/>
</dbReference>
<dbReference type="GO" id="GO:2000679">
    <property type="term" value="P:positive regulation of transcription regulatory region DNA binding"/>
    <property type="evidence" value="ECO:0000250"/>
    <property type="project" value="UniProtKB"/>
</dbReference>
<dbReference type="GO" id="GO:0072107">
    <property type="term" value="P:positive regulation of ureteric bud formation"/>
    <property type="evidence" value="ECO:0000250"/>
    <property type="project" value="UniProtKB"/>
</dbReference>
<dbReference type="GO" id="GO:2000683">
    <property type="term" value="P:regulation of cellular response to X-ray"/>
    <property type="evidence" value="ECO:0000250"/>
    <property type="project" value="UniProtKB"/>
</dbReference>
<dbReference type="GO" id="GO:0001817">
    <property type="term" value="P:regulation of cytokine production"/>
    <property type="evidence" value="ECO:0000250"/>
    <property type="project" value="UniProtKB"/>
</dbReference>
<dbReference type="GO" id="GO:0030856">
    <property type="term" value="P:regulation of epithelial cell differentiation"/>
    <property type="evidence" value="ECO:0000318"/>
    <property type="project" value="GO_Central"/>
</dbReference>
<dbReference type="GO" id="GO:0072182">
    <property type="term" value="P:regulation of nephron tubule epithelial cell differentiation"/>
    <property type="evidence" value="ECO:0000250"/>
    <property type="project" value="UniProtKB"/>
</dbReference>
<dbReference type="GO" id="GO:0007165">
    <property type="term" value="P:signal transduction"/>
    <property type="evidence" value="ECO:0000250"/>
    <property type="project" value="UniProtKB"/>
</dbReference>
<dbReference type="GO" id="GO:0048485">
    <property type="term" value="P:sympathetic nervous system development"/>
    <property type="evidence" value="ECO:0000250"/>
    <property type="project" value="UniProtKB"/>
</dbReference>
<dbReference type="GO" id="GO:0050852">
    <property type="term" value="P:T cell receptor signaling pathway"/>
    <property type="evidence" value="ECO:0000250"/>
    <property type="project" value="UniProtKB"/>
</dbReference>
<dbReference type="GO" id="GO:0031929">
    <property type="term" value="P:TOR signaling"/>
    <property type="evidence" value="ECO:0000250"/>
    <property type="project" value="UniProtKB"/>
</dbReference>
<dbReference type="GO" id="GO:0060676">
    <property type="term" value="P:ureteric bud formation"/>
    <property type="evidence" value="ECO:0000250"/>
    <property type="project" value="UniProtKB"/>
</dbReference>
<dbReference type="GO" id="GO:0060065">
    <property type="term" value="P:uterus development"/>
    <property type="evidence" value="ECO:0000250"/>
    <property type="project" value="UniProtKB"/>
</dbReference>
<dbReference type="GO" id="GO:0003281">
    <property type="term" value="P:ventricular septum development"/>
    <property type="evidence" value="ECO:0000250"/>
    <property type="project" value="UniProtKB"/>
</dbReference>
<dbReference type="CDD" id="cd00202">
    <property type="entry name" value="ZnF_GATA"/>
    <property type="match status" value="2"/>
</dbReference>
<dbReference type="FunFam" id="3.30.50.10:FF:000001">
    <property type="entry name" value="GATA transcription factor (GATAd)"/>
    <property type="match status" value="1"/>
</dbReference>
<dbReference type="FunFam" id="3.30.50.10:FF:000032">
    <property type="entry name" value="Transcription factor GATA-3"/>
    <property type="match status" value="1"/>
</dbReference>
<dbReference type="Gene3D" id="3.30.50.10">
    <property type="entry name" value="Erythroid Transcription Factor GATA-1, subunit A"/>
    <property type="match status" value="2"/>
</dbReference>
<dbReference type="InterPro" id="IPR016374">
    <property type="entry name" value="TF_GATA-2/3"/>
</dbReference>
<dbReference type="InterPro" id="IPR039355">
    <property type="entry name" value="Transcription_factor_GATA"/>
</dbReference>
<dbReference type="InterPro" id="IPR000679">
    <property type="entry name" value="Znf_GATA"/>
</dbReference>
<dbReference type="InterPro" id="IPR013088">
    <property type="entry name" value="Znf_NHR/GATA"/>
</dbReference>
<dbReference type="PANTHER" id="PTHR10071:SF106">
    <property type="entry name" value="TRANS-ACTING T-CELL-SPECIFIC TRANSCRIPTION FACTOR GATA-3"/>
    <property type="match status" value="1"/>
</dbReference>
<dbReference type="PANTHER" id="PTHR10071">
    <property type="entry name" value="TRANSCRIPTION FACTOR GATA FAMILY MEMBER"/>
    <property type="match status" value="1"/>
</dbReference>
<dbReference type="Pfam" id="PF00320">
    <property type="entry name" value="GATA"/>
    <property type="match status" value="2"/>
</dbReference>
<dbReference type="PIRSF" id="PIRSF003027">
    <property type="entry name" value="TF_GATA-1/2/3"/>
    <property type="match status" value="1"/>
</dbReference>
<dbReference type="PRINTS" id="PR00619">
    <property type="entry name" value="GATAZNFINGER"/>
</dbReference>
<dbReference type="SMART" id="SM00401">
    <property type="entry name" value="ZnF_GATA"/>
    <property type="match status" value="2"/>
</dbReference>
<dbReference type="SUPFAM" id="SSF57716">
    <property type="entry name" value="Glucocorticoid receptor-like (DNA-binding domain)"/>
    <property type="match status" value="2"/>
</dbReference>
<dbReference type="PROSITE" id="PS00344">
    <property type="entry name" value="GATA_ZN_FINGER_1"/>
    <property type="match status" value="2"/>
</dbReference>
<dbReference type="PROSITE" id="PS50114">
    <property type="entry name" value="GATA_ZN_FINGER_2"/>
    <property type="match status" value="2"/>
</dbReference>
<comment type="function">
    <text evidence="3">Transcriptional activator which binds to the enhancer of the T-cell receptor alpha and delta genes. Binds to the consensus sequence 5'-AGATAG-3'. Required for the T-helper 2 (Th2) differentiation process following immune and inflammatory responses (By similarity). Positively regulates ASB2 expression (By similarity). Coordinates macrophage transcriptional activation and UCP2-dependent metabolic reprogramming in response to IL33. Upon tissue injury, acts downstream of IL33 signaling to drive differentiation of inflammation-resolving alternatively activated macrophages.</text>
</comment>
<comment type="subunit">
    <text evidence="3">Interacts with the phosphorylated form of TBX21.</text>
</comment>
<comment type="subcellular location">
    <subcellularLocation>
        <location evidence="3">Nucleus</location>
    </subcellularLocation>
</comment>
<comment type="domain">
    <text evidence="1">Binds DNA via the 2 GATA-type zinc fingers. Each zinc finger may bind either adjacent sites in a palindromic motif, or a different DNA molecule allowing looping and long-range gene regulation (By similarity).</text>
</comment>
<comment type="domain">
    <text evidence="1">The YxKxHxxxRP motif is critical for DNA-binding and function.</text>
</comment>
<accession>Q08DV0</accession>
<organism>
    <name type="scientific">Bos taurus</name>
    <name type="common">Bovine</name>
    <dbReference type="NCBI Taxonomy" id="9913"/>
    <lineage>
        <taxon>Eukaryota</taxon>
        <taxon>Metazoa</taxon>
        <taxon>Chordata</taxon>
        <taxon>Craniata</taxon>
        <taxon>Vertebrata</taxon>
        <taxon>Euteleostomi</taxon>
        <taxon>Mammalia</taxon>
        <taxon>Eutheria</taxon>
        <taxon>Laurasiatheria</taxon>
        <taxon>Artiodactyla</taxon>
        <taxon>Ruminantia</taxon>
        <taxon>Pecora</taxon>
        <taxon>Bovidae</taxon>
        <taxon>Bovinae</taxon>
        <taxon>Bos</taxon>
    </lineage>
</organism>
<protein>
    <recommendedName>
        <fullName>Trans-acting T-cell-specific transcription factor GATA-3</fullName>
    </recommendedName>
    <alternativeName>
        <fullName>GATA-binding factor 3</fullName>
    </alternativeName>
</protein>
<evidence type="ECO:0000250" key="1"/>
<evidence type="ECO:0000250" key="2">
    <source>
        <dbReference type="UniProtKB" id="P23771"/>
    </source>
</evidence>
<evidence type="ECO:0000250" key="3">
    <source>
        <dbReference type="UniProtKB" id="P23772"/>
    </source>
</evidence>
<evidence type="ECO:0000255" key="4">
    <source>
        <dbReference type="PROSITE-ProRule" id="PRU00094"/>
    </source>
</evidence>
<evidence type="ECO:0000256" key="5">
    <source>
        <dbReference type="SAM" id="MobiDB-lite"/>
    </source>
</evidence>
<gene>
    <name type="primary">GATA3</name>
</gene>